<organism>
    <name type="scientific">Escherichia coli</name>
    <dbReference type="NCBI Taxonomy" id="562"/>
    <lineage>
        <taxon>Bacteria</taxon>
        <taxon>Pseudomonadati</taxon>
        <taxon>Pseudomonadota</taxon>
        <taxon>Gammaproteobacteria</taxon>
        <taxon>Enterobacterales</taxon>
        <taxon>Enterobacteriaceae</taxon>
        <taxon>Escherichia</taxon>
    </lineage>
</organism>
<feature type="initiator methionine" description="Removed" evidence="1">
    <location>
        <position position="1"/>
    </location>
</feature>
<feature type="chain" id="PRO_0000188522" description="3-deoxy-manno-octulosonate cytidylyltransferase">
    <location>
        <begin position="2"/>
        <end position="72" status="greater than"/>
    </location>
</feature>
<feature type="non-terminal residue">
    <location>
        <position position="72"/>
    </location>
</feature>
<name>KPSU1_ECOLX</name>
<protein>
    <recommendedName>
        <fullName evidence="2">3-deoxy-manno-octulosonate cytidylyltransferase</fullName>
        <ecNumber evidence="2">2.7.7.38</ecNumber>
    </recommendedName>
    <alternativeName>
        <fullName evidence="2">CMP-2-keto-3-deoxyoctulosonic acid synthase</fullName>
        <shortName evidence="2">CKS</shortName>
        <shortName evidence="2">CMP-KDO synthase</shortName>
    </alternativeName>
</protein>
<proteinExistence type="inferred from homology"/>
<keyword id="KW-0963">Cytoplasm</keyword>
<keyword id="KW-0448">Lipopolysaccharide biosynthesis</keyword>
<keyword id="KW-0548">Nucleotidyltransferase</keyword>
<keyword id="KW-0808">Transferase</keyword>
<gene>
    <name type="primary">kpsU</name>
</gene>
<sequence>MSKAVIVIPARYGSSRLPGKPLLDIVGKPMIQHVYERALQVAGVAEVWVATDDQRVEKAVQAFGGKAIMTRN</sequence>
<evidence type="ECO:0000250" key="1"/>
<evidence type="ECO:0000255" key="2">
    <source>
        <dbReference type="HAMAP-Rule" id="MF_00057"/>
    </source>
</evidence>
<dbReference type="EC" id="2.7.7.38" evidence="2"/>
<dbReference type="EMBL" id="M64977">
    <property type="protein sequence ID" value="AAA21683.1"/>
    <property type="molecule type" value="Genomic_DNA"/>
</dbReference>
<dbReference type="SMR" id="P42215"/>
<dbReference type="UniPathway" id="UPA00030"/>
<dbReference type="UniPathway" id="UPA00358">
    <property type="reaction ID" value="UER00476"/>
</dbReference>
<dbReference type="GO" id="GO:0005829">
    <property type="term" value="C:cytosol"/>
    <property type="evidence" value="ECO:0007669"/>
    <property type="project" value="TreeGrafter"/>
</dbReference>
<dbReference type="GO" id="GO:0008690">
    <property type="term" value="F:3-deoxy-manno-octulosonate cytidylyltransferase activity"/>
    <property type="evidence" value="ECO:0007669"/>
    <property type="project" value="UniProtKB-EC"/>
</dbReference>
<dbReference type="GO" id="GO:0033468">
    <property type="term" value="P:CMP-keto-3-deoxy-D-manno-octulosonic acid biosynthetic process"/>
    <property type="evidence" value="ECO:0007669"/>
    <property type="project" value="UniProtKB-UniPathway"/>
</dbReference>
<dbReference type="GO" id="GO:0009103">
    <property type="term" value="P:lipopolysaccharide biosynthetic process"/>
    <property type="evidence" value="ECO:0007669"/>
    <property type="project" value="UniProtKB-UniPathway"/>
</dbReference>
<dbReference type="Gene3D" id="3.90.550.10">
    <property type="entry name" value="Spore Coat Polysaccharide Biosynthesis Protein SpsA, Chain A"/>
    <property type="match status" value="1"/>
</dbReference>
<dbReference type="InterPro" id="IPR003329">
    <property type="entry name" value="Cytidylyl_trans"/>
</dbReference>
<dbReference type="InterPro" id="IPR029044">
    <property type="entry name" value="Nucleotide-diphossugar_trans"/>
</dbReference>
<dbReference type="PANTHER" id="PTHR42866">
    <property type="entry name" value="3-DEOXY-MANNO-OCTULOSONATE CYTIDYLYLTRANSFERASE"/>
    <property type="match status" value="1"/>
</dbReference>
<dbReference type="PANTHER" id="PTHR42866:SF2">
    <property type="entry name" value="3-DEOXY-MANNO-OCTULOSONATE CYTIDYLYLTRANSFERASE, MITOCHONDRIAL"/>
    <property type="match status" value="1"/>
</dbReference>
<dbReference type="Pfam" id="PF02348">
    <property type="entry name" value="CTP_transf_3"/>
    <property type="match status" value="1"/>
</dbReference>
<dbReference type="SUPFAM" id="SSF53448">
    <property type="entry name" value="Nucleotide-diphospho-sugar transferases"/>
    <property type="match status" value="1"/>
</dbReference>
<accession>P42215</accession>
<comment type="function">
    <text evidence="2">Activates KDO (a required 8-carbon sugar) for incorporation into bacterial lipopolysaccharide in Gram-negative bacteria.</text>
</comment>
<comment type="catalytic activity">
    <reaction evidence="2">
        <text>3-deoxy-alpha-D-manno-oct-2-ulosonate + CTP = CMP-3-deoxy-beta-D-manno-octulosonate + diphosphate</text>
        <dbReference type="Rhea" id="RHEA:23448"/>
        <dbReference type="ChEBI" id="CHEBI:33019"/>
        <dbReference type="ChEBI" id="CHEBI:37563"/>
        <dbReference type="ChEBI" id="CHEBI:85986"/>
        <dbReference type="ChEBI" id="CHEBI:85987"/>
        <dbReference type="EC" id="2.7.7.38"/>
    </reaction>
</comment>
<comment type="pathway">
    <text evidence="2">Nucleotide-sugar biosynthesis; CMP-3-deoxy-D-manno-octulosonate biosynthesis; CMP-3-deoxy-D-manno-octulosonate from 3-deoxy-D-manno-octulosonate and CTP: step 1/1.</text>
</comment>
<comment type="pathway">
    <text>Bacterial outer membrane biogenesis; lipopolysaccharide biosynthesis.</text>
</comment>
<comment type="subunit">
    <text>Homodimer.</text>
</comment>
<comment type="subcellular location">
    <subcellularLocation>
        <location evidence="2">Cytoplasm</location>
    </subcellularLocation>
</comment>
<comment type="similarity">
    <text evidence="2">Belongs to the KdsB family.</text>
</comment>
<reference key="1">
    <citation type="journal article" date="1994" name="J. Bacteriol.">
        <title>Nucleotide sequence and mutational analysis of the gene encoding KpsD, a periplasmic protein involved in transport of polysialic acid in Escherichia coli K1.</title>
        <authorList>
            <person name="Wunder D.E."/>
            <person name="Aaronson W."/>
            <person name="Hayes S.F."/>
            <person name="Bliss J.M."/>
            <person name="Silver R.P."/>
        </authorList>
    </citation>
    <scope>NUCLEOTIDE SEQUENCE [GENOMIC DNA]</scope>
    <source>
        <strain>K1</strain>
    </source>
</reference>